<name>SYL_COXBR</name>
<keyword id="KW-0030">Aminoacyl-tRNA synthetase</keyword>
<keyword id="KW-0067">ATP-binding</keyword>
<keyword id="KW-0963">Cytoplasm</keyword>
<keyword id="KW-0436">Ligase</keyword>
<keyword id="KW-0547">Nucleotide-binding</keyword>
<keyword id="KW-0648">Protein biosynthesis</keyword>
<gene>
    <name evidence="1" type="primary">leuS</name>
    <name type="ordered locus">COXBURSA331_A0673</name>
</gene>
<organism>
    <name type="scientific">Coxiella burnetii (strain RSA 331 / Henzerling II)</name>
    <dbReference type="NCBI Taxonomy" id="360115"/>
    <lineage>
        <taxon>Bacteria</taxon>
        <taxon>Pseudomonadati</taxon>
        <taxon>Pseudomonadota</taxon>
        <taxon>Gammaproteobacteria</taxon>
        <taxon>Legionellales</taxon>
        <taxon>Coxiellaceae</taxon>
        <taxon>Coxiella</taxon>
    </lineage>
</organism>
<comment type="catalytic activity">
    <reaction evidence="1">
        <text>tRNA(Leu) + L-leucine + ATP = L-leucyl-tRNA(Leu) + AMP + diphosphate</text>
        <dbReference type="Rhea" id="RHEA:11688"/>
        <dbReference type="Rhea" id="RHEA-COMP:9613"/>
        <dbReference type="Rhea" id="RHEA-COMP:9622"/>
        <dbReference type="ChEBI" id="CHEBI:30616"/>
        <dbReference type="ChEBI" id="CHEBI:33019"/>
        <dbReference type="ChEBI" id="CHEBI:57427"/>
        <dbReference type="ChEBI" id="CHEBI:78442"/>
        <dbReference type="ChEBI" id="CHEBI:78494"/>
        <dbReference type="ChEBI" id="CHEBI:456215"/>
        <dbReference type="EC" id="6.1.1.4"/>
    </reaction>
</comment>
<comment type="subcellular location">
    <subcellularLocation>
        <location evidence="1">Cytoplasm</location>
    </subcellularLocation>
</comment>
<comment type="similarity">
    <text evidence="1">Belongs to the class-I aminoacyl-tRNA synthetase family.</text>
</comment>
<reference key="1">
    <citation type="submission" date="2007-11" db="EMBL/GenBank/DDBJ databases">
        <title>Genome sequencing of phylogenetically and phenotypically diverse Coxiella burnetii isolates.</title>
        <authorList>
            <person name="Seshadri R."/>
            <person name="Samuel J.E."/>
        </authorList>
    </citation>
    <scope>NUCLEOTIDE SEQUENCE [LARGE SCALE GENOMIC DNA]</scope>
    <source>
        <strain>RSA 331 / Henzerling II</strain>
    </source>
</reference>
<evidence type="ECO:0000255" key="1">
    <source>
        <dbReference type="HAMAP-Rule" id="MF_00049"/>
    </source>
</evidence>
<accession>A9NC49</accession>
<proteinExistence type="inferred from homology"/>
<feature type="chain" id="PRO_1000074830" description="Leucine--tRNA ligase">
    <location>
        <begin position="1"/>
        <end position="820"/>
    </location>
</feature>
<feature type="short sequence motif" description="'HIGH' region">
    <location>
        <begin position="42"/>
        <end position="52"/>
    </location>
</feature>
<feature type="short sequence motif" description="'KMSKS' region">
    <location>
        <begin position="576"/>
        <end position="580"/>
    </location>
</feature>
<feature type="binding site" evidence="1">
    <location>
        <position position="579"/>
    </location>
    <ligand>
        <name>ATP</name>
        <dbReference type="ChEBI" id="CHEBI:30616"/>
    </ligand>
</feature>
<protein>
    <recommendedName>
        <fullName evidence="1">Leucine--tRNA ligase</fullName>
        <ecNumber evidence="1">6.1.1.4</ecNumber>
    </recommendedName>
    <alternativeName>
        <fullName evidence="1">Leucyl-tRNA synthetase</fullName>
        <shortName evidence="1">LeuRS</shortName>
    </alternativeName>
</protein>
<dbReference type="EC" id="6.1.1.4" evidence="1"/>
<dbReference type="EMBL" id="CP000890">
    <property type="protein sequence ID" value="ABX78122.1"/>
    <property type="molecule type" value="Genomic_DNA"/>
</dbReference>
<dbReference type="RefSeq" id="WP_012220266.1">
    <property type="nucleotide sequence ID" value="NC_010117.1"/>
</dbReference>
<dbReference type="SMR" id="A9NC49"/>
<dbReference type="KEGG" id="cbs:COXBURSA331_A0673"/>
<dbReference type="HOGENOM" id="CLU_004427_0_0_6"/>
<dbReference type="GO" id="GO:0005829">
    <property type="term" value="C:cytosol"/>
    <property type="evidence" value="ECO:0007669"/>
    <property type="project" value="TreeGrafter"/>
</dbReference>
<dbReference type="GO" id="GO:0002161">
    <property type="term" value="F:aminoacyl-tRNA deacylase activity"/>
    <property type="evidence" value="ECO:0007669"/>
    <property type="project" value="InterPro"/>
</dbReference>
<dbReference type="GO" id="GO:0005524">
    <property type="term" value="F:ATP binding"/>
    <property type="evidence" value="ECO:0007669"/>
    <property type="project" value="UniProtKB-UniRule"/>
</dbReference>
<dbReference type="GO" id="GO:0004823">
    <property type="term" value="F:leucine-tRNA ligase activity"/>
    <property type="evidence" value="ECO:0007669"/>
    <property type="project" value="UniProtKB-UniRule"/>
</dbReference>
<dbReference type="GO" id="GO:0006429">
    <property type="term" value="P:leucyl-tRNA aminoacylation"/>
    <property type="evidence" value="ECO:0007669"/>
    <property type="project" value="UniProtKB-UniRule"/>
</dbReference>
<dbReference type="CDD" id="cd07958">
    <property type="entry name" value="Anticodon_Ia_Leu_BEm"/>
    <property type="match status" value="1"/>
</dbReference>
<dbReference type="CDD" id="cd00812">
    <property type="entry name" value="LeuRS_core"/>
    <property type="match status" value="1"/>
</dbReference>
<dbReference type="FunFam" id="1.10.730.10:FF:000003">
    <property type="entry name" value="Leucine--tRNA ligase"/>
    <property type="match status" value="1"/>
</dbReference>
<dbReference type="FunFam" id="3.10.20.590:FF:000001">
    <property type="entry name" value="Leucine--tRNA ligase"/>
    <property type="match status" value="1"/>
</dbReference>
<dbReference type="FunFam" id="3.40.50.620:FF:000056">
    <property type="entry name" value="Leucine--tRNA ligase"/>
    <property type="match status" value="1"/>
</dbReference>
<dbReference type="FunFam" id="3.40.50.620:FF:000395">
    <property type="entry name" value="Leucine--tRNA ligase"/>
    <property type="match status" value="1"/>
</dbReference>
<dbReference type="FunFam" id="3.90.740.10:FF:000012">
    <property type="entry name" value="Leucine--tRNA ligase"/>
    <property type="match status" value="1"/>
</dbReference>
<dbReference type="Gene3D" id="3.10.20.590">
    <property type="match status" value="1"/>
</dbReference>
<dbReference type="Gene3D" id="3.40.50.620">
    <property type="entry name" value="HUPs"/>
    <property type="match status" value="2"/>
</dbReference>
<dbReference type="Gene3D" id="1.10.730.10">
    <property type="entry name" value="Isoleucyl-tRNA Synthetase, Domain 1"/>
    <property type="match status" value="1"/>
</dbReference>
<dbReference type="Gene3D" id="3.90.740.10">
    <property type="entry name" value="Valyl/Leucyl/Isoleucyl-tRNA synthetase, editing domain"/>
    <property type="match status" value="1"/>
</dbReference>
<dbReference type="HAMAP" id="MF_00049_B">
    <property type="entry name" value="Leu_tRNA_synth_B"/>
    <property type="match status" value="1"/>
</dbReference>
<dbReference type="InterPro" id="IPR001412">
    <property type="entry name" value="aa-tRNA-synth_I_CS"/>
</dbReference>
<dbReference type="InterPro" id="IPR002300">
    <property type="entry name" value="aa-tRNA-synth_Ia"/>
</dbReference>
<dbReference type="InterPro" id="IPR002302">
    <property type="entry name" value="Leu-tRNA-ligase"/>
</dbReference>
<dbReference type="InterPro" id="IPR025709">
    <property type="entry name" value="Leu_tRNA-synth_edit"/>
</dbReference>
<dbReference type="InterPro" id="IPR013155">
    <property type="entry name" value="M/V/L/I-tRNA-synth_anticd-bd"/>
</dbReference>
<dbReference type="InterPro" id="IPR015413">
    <property type="entry name" value="Methionyl/Leucyl_tRNA_Synth"/>
</dbReference>
<dbReference type="InterPro" id="IPR014729">
    <property type="entry name" value="Rossmann-like_a/b/a_fold"/>
</dbReference>
<dbReference type="InterPro" id="IPR009080">
    <property type="entry name" value="tRNAsynth_Ia_anticodon-bd"/>
</dbReference>
<dbReference type="InterPro" id="IPR009008">
    <property type="entry name" value="Val/Leu/Ile-tRNA-synth_edit"/>
</dbReference>
<dbReference type="NCBIfam" id="TIGR00396">
    <property type="entry name" value="leuS_bact"/>
    <property type="match status" value="1"/>
</dbReference>
<dbReference type="PANTHER" id="PTHR43740:SF2">
    <property type="entry name" value="LEUCINE--TRNA LIGASE, MITOCHONDRIAL"/>
    <property type="match status" value="1"/>
</dbReference>
<dbReference type="PANTHER" id="PTHR43740">
    <property type="entry name" value="LEUCYL-TRNA SYNTHETASE"/>
    <property type="match status" value="1"/>
</dbReference>
<dbReference type="Pfam" id="PF08264">
    <property type="entry name" value="Anticodon_1"/>
    <property type="match status" value="1"/>
</dbReference>
<dbReference type="Pfam" id="PF00133">
    <property type="entry name" value="tRNA-synt_1"/>
    <property type="match status" value="1"/>
</dbReference>
<dbReference type="Pfam" id="PF13603">
    <property type="entry name" value="tRNA-synt_1_2"/>
    <property type="match status" value="1"/>
</dbReference>
<dbReference type="Pfam" id="PF09334">
    <property type="entry name" value="tRNA-synt_1g"/>
    <property type="match status" value="1"/>
</dbReference>
<dbReference type="PRINTS" id="PR00985">
    <property type="entry name" value="TRNASYNTHLEU"/>
</dbReference>
<dbReference type="SUPFAM" id="SSF47323">
    <property type="entry name" value="Anticodon-binding domain of a subclass of class I aminoacyl-tRNA synthetases"/>
    <property type="match status" value="1"/>
</dbReference>
<dbReference type="SUPFAM" id="SSF52374">
    <property type="entry name" value="Nucleotidylyl transferase"/>
    <property type="match status" value="1"/>
</dbReference>
<dbReference type="SUPFAM" id="SSF50677">
    <property type="entry name" value="ValRS/IleRS/LeuRS editing domain"/>
    <property type="match status" value="1"/>
</dbReference>
<dbReference type="PROSITE" id="PS00178">
    <property type="entry name" value="AA_TRNA_LIGASE_I"/>
    <property type="match status" value="1"/>
</dbReference>
<sequence length="820" mass="94293">MNESYQPTLIEQLAQEYWEENETFEVKEDLSREKFYCLSMLPYPSGDLHMGHVRNYTIGDVIARYQIHKGRNVLQPMGWDAFGLPAENAAIQRELPPAEWTRKNIKKMRKQLKQLGFAYDWSREITTCDSTYYRWEQWLFLQLYKKGLAYKKNAIVNWDPVDQTVLANEQIVDGRGWRSGAVVERREISQWFLKITDYSEELLKDLDELKEWPEQVITMQRNWIGQSQGVIINFNFEKGPDKLQVYTTRPDTLMGVTYLAIAPEHPLAKERAKKSKKIAAFLKKCKQTRVAEADIATQEKEGIDSGLFAVHPLSKEKLPIWIANFVLMEYASGVVMAVPAHDERDHEFALKYDLPLKPVIEPADGHDWDYNQAAYTNPGKLINSGSFNDIDSKTAFNVIADYLKNNGAGSRQTHYRLRDWGISRQRYWGTPIPIIYCKTCGTVPVPENQLPVLLPEDIIPTGHGSPLKETASFYKTRCPVCNKPATRETDTMDTFVESSWYYARYSCPDQDKVMLDDRAKYWTPVDQYIGGIEHAVMHLLYARFMHKILRDLGLLNSNEPFIRLLTQGMVLKDGAKMSKSKGNVVTPQSLIKKYGADTVRLFIIFAAPPEQDLEWSDSGVEGAYRFLKKLWGFSYRIKDALLAINQQKERSNYQWEAPEHRQTRQQIHECLQQANIDMERLQFNTVVSAVMKILNILIKLTTDNDAEAHLIREGTGILLRLLSPITPHISHHLWQSLGFGGDILDTPWPRPDPKALQTTELELIVQINGKLRGRIQVPTEASKEIIESTALNQENVQRHLADKKIKKVIVVPKKLINIVV</sequence>